<evidence type="ECO:0000255" key="1">
    <source>
        <dbReference type="HAMAP-Rule" id="MF_01604"/>
    </source>
</evidence>
<sequence>MPFRSNNPITRDELLSRFFPQFHPVTTFNSGLSGGSFLIEHQGQRFVVRQPHDPDAPQSAFLHQYRALSQLPACIAPKPHLYLRDWMVVDYLPGEVKTYLPDTNELAGLLYYLHQQPRFGWRITLLPLLELYWQQSDPARRTVGWLRMLKRLRKAREPRPLRLSPLHMDVHAGNLVHSASGLKLIDWEYAGDGDIALELAAVWVENTEQHRQLVNDYATRAKIYPAQLWRQVRRWFPWLLMLKAGWFEYRWRQTGDQQFIRLADDTWRQLLIKQ</sequence>
<dbReference type="EC" id="2.7.1.89" evidence="1"/>
<dbReference type="EMBL" id="CP001164">
    <property type="protein sequence ID" value="ACI34658.1"/>
    <property type="molecule type" value="Genomic_DNA"/>
</dbReference>
<dbReference type="RefSeq" id="WP_001116562.1">
    <property type="nucleotide sequence ID" value="NC_011353.1"/>
</dbReference>
<dbReference type="SMR" id="B5YVX5"/>
<dbReference type="KEGG" id="ecf:ECH74115_1486"/>
<dbReference type="HOGENOM" id="CLU_055115_2_1_6"/>
<dbReference type="UniPathway" id="UPA00060">
    <property type="reaction ID" value="UER00596"/>
</dbReference>
<dbReference type="GO" id="GO:0005524">
    <property type="term" value="F:ATP binding"/>
    <property type="evidence" value="ECO:0007669"/>
    <property type="project" value="UniProtKB-KW"/>
</dbReference>
<dbReference type="GO" id="GO:0019165">
    <property type="term" value="F:thiamine kinase activity"/>
    <property type="evidence" value="ECO:0007669"/>
    <property type="project" value="UniProtKB-UniRule"/>
</dbReference>
<dbReference type="GO" id="GO:0009229">
    <property type="term" value="P:thiamine diphosphate biosynthetic process"/>
    <property type="evidence" value="ECO:0007669"/>
    <property type="project" value="UniProtKB-UniRule"/>
</dbReference>
<dbReference type="GO" id="GO:0006772">
    <property type="term" value="P:thiamine metabolic process"/>
    <property type="evidence" value="ECO:0007669"/>
    <property type="project" value="InterPro"/>
</dbReference>
<dbReference type="FunFam" id="3.90.1200.10:FF:000004">
    <property type="entry name" value="Thiamine kinase"/>
    <property type="match status" value="1"/>
</dbReference>
<dbReference type="Gene3D" id="3.90.1200.10">
    <property type="match status" value="1"/>
</dbReference>
<dbReference type="HAMAP" id="MF_01604">
    <property type="entry name" value="Thiamine_kinase"/>
    <property type="match status" value="1"/>
</dbReference>
<dbReference type="InterPro" id="IPR002575">
    <property type="entry name" value="Aminoglycoside_PTrfase"/>
</dbReference>
<dbReference type="InterPro" id="IPR011009">
    <property type="entry name" value="Kinase-like_dom_sf"/>
</dbReference>
<dbReference type="InterPro" id="IPR014093">
    <property type="entry name" value="Thiamine_kinase"/>
</dbReference>
<dbReference type="NCBIfam" id="NF007620">
    <property type="entry name" value="PRK10271.1"/>
    <property type="match status" value="1"/>
</dbReference>
<dbReference type="NCBIfam" id="TIGR02721">
    <property type="entry name" value="ycfN_thiK"/>
    <property type="match status" value="1"/>
</dbReference>
<dbReference type="Pfam" id="PF01636">
    <property type="entry name" value="APH"/>
    <property type="match status" value="1"/>
</dbReference>
<dbReference type="SUPFAM" id="SSF56112">
    <property type="entry name" value="Protein kinase-like (PK-like)"/>
    <property type="match status" value="1"/>
</dbReference>
<comment type="function">
    <text evidence="1">Catalyzes the ATP-dependent phosphorylation of thiamine to thiamine phosphate. Is involved in thiamine salvage.</text>
</comment>
<comment type="catalytic activity">
    <reaction evidence="1">
        <text>thiamine + ATP = thiamine phosphate + ADP + H(+)</text>
        <dbReference type="Rhea" id="RHEA:12012"/>
        <dbReference type="ChEBI" id="CHEBI:15378"/>
        <dbReference type="ChEBI" id="CHEBI:18385"/>
        <dbReference type="ChEBI" id="CHEBI:30616"/>
        <dbReference type="ChEBI" id="CHEBI:37575"/>
        <dbReference type="ChEBI" id="CHEBI:456216"/>
        <dbReference type="EC" id="2.7.1.89"/>
    </reaction>
    <physiologicalReaction direction="left-to-right" evidence="1">
        <dbReference type="Rhea" id="RHEA:12013"/>
    </physiologicalReaction>
</comment>
<comment type="pathway">
    <text evidence="1">Cofactor biosynthesis; thiamine diphosphate biosynthesis; thiamine phosphate from thiamine: step 1/1.</text>
</comment>
<comment type="similarity">
    <text evidence="1">Belongs to the thiamine kinase family.</text>
</comment>
<protein>
    <recommendedName>
        <fullName evidence="1">Thiamine kinase</fullName>
        <ecNumber evidence="1">2.7.1.89</ecNumber>
    </recommendedName>
</protein>
<name>THIK_ECO5E</name>
<proteinExistence type="inferred from homology"/>
<accession>B5YVX5</accession>
<keyword id="KW-0067">ATP-binding</keyword>
<keyword id="KW-0418">Kinase</keyword>
<keyword id="KW-0547">Nucleotide-binding</keyword>
<keyword id="KW-0808">Transferase</keyword>
<gene>
    <name evidence="1" type="primary">thiK</name>
    <name type="ordered locus">ECH74115_1486</name>
</gene>
<feature type="chain" id="PRO_1000198090" description="Thiamine kinase">
    <location>
        <begin position="1"/>
        <end position="274"/>
    </location>
</feature>
<organism>
    <name type="scientific">Escherichia coli O157:H7 (strain EC4115 / EHEC)</name>
    <dbReference type="NCBI Taxonomy" id="444450"/>
    <lineage>
        <taxon>Bacteria</taxon>
        <taxon>Pseudomonadati</taxon>
        <taxon>Pseudomonadota</taxon>
        <taxon>Gammaproteobacteria</taxon>
        <taxon>Enterobacterales</taxon>
        <taxon>Enterobacteriaceae</taxon>
        <taxon>Escherichia</taxon>
    </lineage>
</organism>
<reference key="1">
    <citation type="journal article" date="2011" name="Proc. Natl. Acad. Sci. U.S.A.">
        <title>Genomic anatomy of Escherichia coli O157:H7 outbreaks.</title>
        <authorList>
            <person name="Eppinger M."/>
            <person name="Mammel M.K."/>
            <person name="Leclerc J.E."/>
            <person name="Ravel J."/>
            <person name="Cebula T.A."/>
        </authorList>
    </citation>
    <scope>NUCLEOTIDE SEQUENCE [LARGE SCALE GENOMIC DNA]</scope>
    <source>
        <strain>EC4115 / EHEC</strain>
    </source>
</reference>